<gene>
    <name type="primary">L</name>
</gene>
<proteinExistence type="inferred from homology"/>
<comment type="function">
    <text evidence="1">RNA-directed RNA polymerase that catalyzes the transcription of viral mRNAs, their capping and polyadenylation. The template is composed of the viral RNA tightly encapsidated by the nucleoprotein (N). The viral polymerase binds to the genomic RNA at the 3' leader promoter, and transcribes subsequently all viral mRNAs with a decreasing efficiency. The first gene is the most transcribed, and the last the least transcribed. The viral phosphoprotein acts as a processivity factor. Capping is concomitant with initiation of mRNA transcription. Indeed, a GDP polyribonucleotidyl transferase (PRNTase) adds the cap structure when the nascent RNA chain length has reached few nucleotides. Ribose 2'-O methylation of viral mRNA cap precedes and facilitates subsequent guanine-N-7 methylation, both activities being carried by the viral polymerase. Polyadenylation of mRNAs occur by a stuttering mechanism at a slipery stop site present at the end viral genes. After finishing transcription of a mRNA, the polymerase can resume transcription of the downstream gene.</text>
</comment>
<comment type="function">
    <text evidence="1">RNA-directed RNA polymerase that catalyzes the replication of viral genomic RNA. The template is composed of the viral RNA tightly encapsidated by the nucleoprotein (N). The replicase mode is dependent on intracellular N protein concentration. In this mode, the polymerase replicates the whole viral genome without recognizing transcriptional signals, and the replicated genome is not caped or polyadenylated.</text>
</comment>
<comment type="catalytic activity">
    <reaction evidence="3">
        <text>RNA(n) + a ribonucleoside 5'-triphosphate = RNA(n+1) + diphosphate</text>
        <dbReference type="Rhea" id="RHEA:21248"/>
        <dbReference type="Rhea" id="RHEA-COMP:14527"/>
        <dbReference type="Rhea" id="RHEA-COMP:17342"/>
        <dbReference type="ChEBI" id="CHEBI:33019"/>
        <dbReference type="ChEBI" id="CHEBI:61557"/>
        <dbReference type="ChEBI" id="CHEBI:140395"/>
        <dbReference type="EC" id="2.7.7.48"/>
    </reaction>
</comment>
<comment type="catalytic activity">
    <reaction evidence="1">
        <text>a 5'-end (5'-triphosphoguanosine)-adenylyl-adenylyl-cytidylyl-adenosine in mRNA + 2 S-adenosyl-L-methionine = a 5'-end (N(7)-methyl 5'-triphosphoguanosine)-(2'-O-methyladenylyl)-adenylyl-cytidylyl-adenosine in mRNA + 2 S-adenosyl-L-homocysteine + H(+)</text>
        <dbReference type="Rhea" id="RHEA:65376"/>
        <dbReference type="Rhea" id="RHEA-COMP:16797"/>
        <dbReference type="Rhea" id="RHEA-COMP:16798"/>
        <dbReference type="ChEBI" id="CHEBI:15378"/>
        <dbReference type="ChEBI" id="CHEBI:57856"/>
        <dbReference type="ChEBI" id="CHEBI:59789"/>
        <dbReference type="ChEBI" id="CHEBI:156483"/>
        <dbReference type="ChEBI" id="CHEBI:156484"/>
        <dbReference type="EC" id="2.1.1.375"/>
    </reaction>
</comment>
<comment type="catalytic activity">
    <reaction evidence="1">
        <text>a 5'-end (5'-triphosphoguanosine)-adenylyl-adenylyl-cytidylyl-adenosine in mRNA + S-adenosyl-L-methionine = a 5'-end (5'-triphosphoguanosine)-(2'-O-methyladenylyl)-adenylyl-cytidylyl-adenosine in mRNA + S-adenosyl-L-homocysteine + H(+)</text>
        <dbReference type="Rhea" id="RHEA:65380"/>
        <dbReference type="Rhea" id="RHEA-COMP:16797"/>
        <dbReference type="Rhea" id="RHEA-COMP:16801"/>
        <dbReference type="ChEBI" id="CHEBI:15378"/>
        <dbReference type="ChEBI" id="CHEBI:57856"/>
        <dbReference type="ChEBI" id="CHEBI:59789"/>
        <dbReference type="ChEBI" id="CHEBI:156482"/>
        <dbReference type="ChEBI" id="CHEBI:156484"/>
    </reaction>
</comment>
<comment type="catalytic activity">
    <reaction evidence="2">
        <text>a 5'-end triphospho-adenylyl-adenylyl-cytidylyl-adenosine in mRNA + GDP + H(+) = a 5'-end (5'-triphosphoguanosine)-adenylyl-adenylyl-cytidylyl-adenosine in mRNA + diphosphate</text>
        <dbReference type="Rhea" id="RHEA:65436"/>
        <dbReference type="Rhea" id="RHEA-COMP:16797"/>
        <dbReference type="Rhea" id="RHEA-COMP:16799"/>
        <dbReference type="ChEBI" id="CHEBI:15378"/>
        <dbReference type="ChEBI" id="CHEBI:33019"/>
        <dbReference type="ChEBI" id="CHEBI:58189"/>
        <dbReference type="ChEBI" id="CHEBI:156484"/>
        <dbReference type="ChEBI" id="CHEBI:156503"/>
        <dbReference type="EC" id="2.7.7.88"/>
    </reaction>
</comment>
<comment type="catalytic activity">
    <reaction evidence="1">
        <text>a 5'-end (5'-triphosphoguanosine)-(2'-O-methyladenylyl)-adenylyl-cytidylyl-adenosine in mRNA + S-adenosyl-L-methionine = a 5'-end (N(7)-methyl 5'-triphosphoguanosine)-(2'-O-methyladenylyl)-adenylyl-cytidylyl-adenosine in mRNA + S-adenosyl-L-homocysteine</text>
        <dbReference type="Rhea" id="RHEA:65440"/>
        <dbReference type="Rhea" id="RHEA-COMP:16798"/>
        <dbReference type="Rhea" id="RHEA-COMP:16801"/>
        <dbReference type="ChEBI" id="CHEBI:57856"/>
        <dbReference type="ChEBI" id="CHEBI:59789"/>
        <dbReference type="ChEBI" id="CHEBI:156482"/>
        <dbReference type="ChEBI" id="CHEBI:156483"/>
    </reaction>
</comment>
<comment type="catalytic activity">
    <reaction evidence="2">
        <text>GTP + H2O = GDP + phosphate + H(+)</text>
        <dbReference type="Rhea" id="RHEA:19669"/>
        <dbReference type="ChEBI" id="CHEBI:15377"/>
        <dbReference type="ChEBI" id="CHEBI:15378"/>
        <dbReference type="ChEBI" id="CHEBI:37565"/>
        <dbReference type="ChEBI" id="CHEBI:43474"/>
        <dbReference type="ChEBI" id="CHEBI:58189"/>
    </reaction>
</comment>
<comment type="subunit">
    <text evidence="1">May form homodimer. Interacts with the P protein.</text>
</comment>
<comment type="subcellular location">
    <subcellularLocation>
        <location evidence="1">Virion</location>
    </subcellularLocation>
    <subcellularLocation>
        <location evidence="1">Host cytoplasm</location>
    </subcellularLocation>
    <text evidence="1">L and P are packaged asymmetrically towards the blunt end of the virus.</text>
</comment>
<comment type="similarity">
    <text evidence="5">Belongs to the rhabdoviridae protein L family.</text>
</comment>
<feature type="chain" id="PRO_0000432052" description="RNA-directed RNA polymerase L">
    <location>
        <begin position="1"/>
        <end position="2119"/>
    </location>
</feature>
<feature type="domain" description="RdRp catalytic" evidence="3">
    <location>
        <begin position="612"/>
        <end position="798"/>
    </location>
</feature>
<feature type="domain" description="Mononegavirus-type SAM-dependent 2'-O-MTase" evidence="4">
    <location>
        <begin position="1658"/>
        <end position="1855"/>
    </location>
</feature>
<reference key="1">
    <citation type="journal article" date="2011" name="J. Gen. Virol.">
        <title>Tibrogargan and Coastal Plains rhabdoviruses: genomic characterization, evolution of novel genes and seroprevalence in Australian livestock.</title>
        <authorList>
            <person name="Gubala A."/>
            <person name="Davis S."/>
            <person name="Weir R."/>
            <person name="Melville L."/>
            <person name="Cowled C."/>
            <person name="Boyle D."/>
        </authorList>
    </citation>
    <scope>NUCLEOTIDE SEQUENCE [GENOMIC RNA]</scope>
    <source>
        <strain>CS132</strain>
    </source>
</reference>
<accession>D8V078</accession>
<name>L_TIBVC</name>
<sequence>MDHNFEFYDDGGYDYDFSEENVDDCIENVDCTDYCSLNLINSYDYNLNSPITPEKLNNCLSYCQGLPYDQIFYNPDYVKVKLMISHFKTVNVDDIPYYSELVKIWPKIISNVNCPQKGREFLVNAFDNFEFIYTIIRSFYKGWYKKEPETTYLDVLTNLNRLLDRDLSWFSMFLDLFFIINLMNAKTVMEQKNICLKRKWKAYKLNDEIIYFSGQTETLGVFALSGEFVLIESQNLLLDRNTTLMIKDTLVGRFQTILSMICLQNEYQYQENEISYLRQLYDLGDQILSTYGSEGYDIIKTLEMICNNWICDESFKYFRPMPDFTSFRSHVTNTIQDLVNNGYALASAWFNHIMNTTSINLVLVFYGSFRHWGHPPIEVLQGLRNLEGLVNEKHDVDDNYCQALASDLAFKVLKKKFREDKKWYVDHKKMDQNNLLYTHIKNNTWPNPQTRIQFGDNWHKLPLIKCFELPDMIDLSSIYSDKSHSLTRSQVVEHVRYNSDKPIPTKRVLNTLLETENVNWPEFLKSVNDFGLPPEDLVIGLKPKEREMKRTGRFFSLMTWNLRNYFVMTELLIKEHFIGLFNGLTMADDLQGLIKKLLDRTTGQGDSKIKKINIANGLDYTKWNNYQRYDSNRYVFRVMGQFLGYDMLIERTHQFFEQSLIYYPQRPDLMMVQNNTLENRGNEIVCWNGQLGGLEGLRQKGWSVLNYLMIERESKVRNSQIKILAQGDNQIIFTSCFLDPYYSDEELLDNMMRAKDNNEAIMNAVMKGAEKIGLVINMDETIQSCCYANYGKVIIFRGKILGLSTKRWSRVTCSSNDQIPSLGTLLASVSTNAMTVGNFSETPHDAILGHLIFGLIVLEVLAQHNPAIRGDPSKYIVQHKLMSHPLFKIILLYLDPSLGGIGGTSVNRFLIRAFADPVTESLSFWKLIYENCNDNVIKNLCLEVGNPSLAVYNDDHFLKLVEKPESLNIPKGISSTNMIKEQIKLSLINNAHNIKNKIIHDVTVRIREEEPALIAWLKSIKPVFPRFLSEMASSTFYGLSNNLISLFTNSRTIRNCFKTKCLKEVDYLIIKSEVIGIVSCLKLVIKTHTNKPDNIWTCSAAHADKLRKQSWNEDIIGMTVPHPIEMHKIGYVVNGECLHCYENKLSQCYISILTPRGIPNTDYYCEGGPYKPYLGSSTNEGTSVLQPWEKETKIPIIRRAARLRDVISWFVGEDSNLSESIINNLEALTGENWGNYMRGFKRTGSALHRFRCARVSNGGFSACSPTKSSWMIVTTDTMTGLDESNYDFMFQASIIFSQVTVGSIQRSTSQIYHMHLNCQECLREIKEPLLESDWVLKPRPVHELLKQWRPDPDLPWGFKNQICEIKNHSTEWDLEPNTSKCYFVGLILGFLFGDKVLSNGIQTENNLFPLSIRSRLDPSYFYGGLLRGFKLIAAIHLTHRRNVISGQDSKSMLYGTLYYLIEEVSCDTDFVQFVSTGNLHNELFYSPHKIPPSYPLSGKDLGSLCRSYLKYQLKDSDMSSELRYVWVFADIRSPKLLCTLGISLYVERLLFKESLTKKDKELIKRYQEDYILGNNNELPTDMLNFYISNLRFCESEVRHSCKFSLPKIEYSLNQATSTWGQECWGYVNELDIICVADTISYPKIQVPQYRNPVISGLRLFQCATGAHYKIRSILKHYSVQYRDALIGGDGSGGISALCLRYNARSRIIFNSLLQLEDSILSGSRPTGPSAVASMGDMKLRCVNFDSVWQEPSDLRELQTWKYFLRLKQDFNLKIDLAIFDMEVTDEISISQIDDMLISHLHCIFTTQTNTLIYKTYLDRVLNYPDMLLKLCQNFKSVKAVTTEFSSFKTSEIYLVCQNIETYPILSRTALEEETRQRLLKLAYANSPLSHEISRAFKIYSRKDLMDGVPNHLISDPFLDLSTLFVMSGSLTSDACAILQLKNRSNLLNILISELCKLTNIIFELTVIHPKKIKVPSSPNINNYFALVIGIGTWFAFVLNDPDYIRLIDAIINKQVYTDIYFYAQKNNKGIINQWKVSDNQSGKLICKKKFHISHKLATIGQVIRSCELSYRTITNPLPIQSTSVNQLIQQKNKKLKLKYIFKSCDLFFYLPDSILDTST</sequence>
<evidence type="ECO:0000250" key="1">
    <source>
        <dbReference type="UniProtKB" id="P03523"/>
    </source>
</evidence>
<evidence type="ECO:0000250" key="2">
    <source>
        <dbReference type="UniProtKB" id="P28887"/>
    </source>
</evidence>
<evidence type="ECO:0000255" key="3">
    <source>
        <dbReference type="PROSITE-ProRule" id="PRU00539"/>
    </source>
</evidence>
<evidence type="ECO:0000255" key="4">
    <source>
        <dbReference type="PROSITE-ProRule" id="PRU00923"/>
    </source>
</evidence>
<evidence type="ECO:0000305" key="5"/>
<organism>
    <name type="scientific">Tibrogargan virus (strain CS132)</name>
    <name type="common">TIBV</name>
    <dbReference type="NCBI Taxonomy" id="1559361"/>
    <lineage>
        <taxon>Viruses</taxon>
        <taxon>Riboviria</taxon>
        <taxon>Orthornavirae</taxon>
        <taxon>Negarnaviricota</taxon>
        <taxon>Haploviricotina</taxon>
        <taxon>Monjiviricetes</taxon>
        <taxon>Mononegavirales</taxon>
        <taxon>Rhabdoviridae</taxon>
        <taxon>Alpharhabdovirinae</taxon>
        <taxon>Tibrovirus</taxon>
        <taxon>Tibrovirus tibrogargan</taxon>
    </lineage>
</organism>
<organismHost>
    <name type="scientific">Bos taurus</name>
    <name type="common">Bovine</name>
    <dbReference type="NCBI Taxonomy" id="9913"/>
</organismHost>
<organismHost>
    <name type="scientific">Culicoides brevitarsis</name>
    <dbReference type="NCBI Taxonomy" id="469753"/>
</organismHost>
<keyword id="KW-0067">ATP-binding</keyword>
<keyword id="KW-1035">Host cytoplasm</keyword>
<keyword id="KW-0378">Hydrolase</keyword>
<keyword id="KW-0489">Methyltransferase</keyword>
<keyword id="KW-0506">mRNA capping</keyword>
<keyword id="KW-0507">mRNA processing</keyword>
<keyword id="KW-0511">Multifunctional enzyme</keyword>
<keyword id="KW-0547">Nucleotide-binding</keyword>
<keyword id="KW-0548">Nucleotidyltransferase</keyword>
<keyword id="KW-1185">Reference proteome</keyword>
<keyword id="KW-0696">RNA-directed RNA polymerase</keyword>
<keyword id="KW-0949">S-adenosyl-L-methionine</keyword>
<keyword id="KW-0808">Transferase</keyword>
<keyword id="KW-0693">Viral RNA replication</keyword>
<keyword id="KW-1195">Viral transcription</keyword>
<keyword id="KW-0946">Virion</keyword>
<protein>
    <recommendedName>
        <fullName>RNA-directed RNA polymerase L</fullName>
        <shortName>Protein L</shortName>
    </recommendedName>
    <alternativeName>
        <fullName>Large structural protein</fullName>
    </alternativeName>
    <alternativeName>
        <fullName>Replicase</fullName>
    </alternativeName>
    <alternativeName>
        <fullName>Transcriptase</fullName>
    </alternativeName>
    <domain>
        <recommendedName>
            <fullName>RNA-directed RNA polymerase</fullName>
            <ecNumber evidence="2">2.7.7.48</ecNumber>
        </recommendedName>
    </domain>
    <domain>
        <recommendedName>
            <fullName evidence="1">GTP phosphohydrolase</fullName>
            <ecNumber evidence="1">3.6.1.-</ecNumber>
        </recommendedName>
    </domain>
    <domain>
        <recommendedName>
            <fullName evidence="5">GDP polyribonucleotidyltransferase</fullName>
            <ecNumber evidence="1">2.7.7.88</ecNumber>
        </recommendedName>
        <alternativeName>
            <fullName evidence="5">PRNTase</fullName>
        </alternativeName>
    </domain>
    <domain>
        <recommendedName>
            <fullName evidence="5">mRNA cap methyltransferase</fullName>
            <ecNumber evidence="1">2.1.1.375</ecNumber>
        </recommendedName>
        <alternativeName>
            <fullName evidence="1">mRNA (guanine-N(7)-)-methyltransferase</fullName>
            <shortName evidence="1">G-N7-MTase</shortName>
        </alternativeName>
        <alternativeName>
            <fullName evidence="1">mRNA (nucleoside-2'-O-)-methyltransferase</fullName>
            <shortName evidence="1">N1-2'-O-MTase</shortName>
        </alternativeName>
    </domain>
</protein>
<dbReference type="EC" id="2.7.7.48" evidence="2"/>
<dbReference type="EC" id="3.6.1.-" evidence="1"/>
<dbReference type="EC" id="2.7.7.88" evidence="1"/>
<dbReference type="EC" id="2.1.1.375" evidence="1"/>
<dbReference type="EMBL" id="GQ294472">
    <property type="protein sequence ID" value="ADG86355.1"/>
    <property type="molecule type" value="Viral_cRNA"/>
</dbReference>
<dbReference type="RefSeq" id="YP_007641376.1">
    <property type="nucleotide sequence ID" value="NC_020804.1"/>
</dbReference>
<dbReference type="SMR" id="D8V078"/>
<dbReference type="GeneID" id="14857905"/>
<dbReference type="KEGG" id="vg:14857905"/>
<dbReference type="Proteomes" id="UP000029770">
    <property type="component" value="Segment"/>
</dbReference>
<dbReference type="GO" id="GO:0030430">
    <property type="term" value="C:host cell cytoplasm"/>
    <property type="evidence" value="ECO:0007669"/>
    <property type="project" value="UniProtKB-SubCell"/>
</dbReference>
<dbReference type="GO" id="GO:0044423">
    <property type="term" value="C:virion component"/>
    <property type="evidence" value="ECO:0007669"/>
    <property type="project" value="UniProtKB-KW"/>
</dbReference>
<dbReference type="GO" id="GO:0005524">
    <property type="term" value="F:ATP binding"/>
    <property type="evidence" value="ECO:0007669"/>
    <property type="project" value="UniProtKB-KW"/>
</dbReference>
<dbReference type="GO" id="GO:0003924">
    <property type="term" value="F:GTPase activity"/>
    <property type="evidence" value="ECO:0007669"/>
    <property type="project" value="RHEA"/>
</dbReference>
<dbReference type="GO" id="GO:0004482">
    <property type="term" value="F:mRNA 5'-cap (guanine-N7-)-methyltransferase activity"/>
    <property type="evidence" value="ECO:0007669"/>
    <property type="project" value="InterPro"/>
</dbReference>
<dbReference type="GO" id="GO:0003968">
    <property type="term" value="F:RNA-directed RNA polymerase activity"/>
    <property type="evidence" value="ECO:0007669"/>
    <property type="project" value="UniProtKB-KW"/>
</dbReference>
<dbReference type="GO" id="GO:0019083">
    <property type="term" value="P:viral transcription"/>
    <property type="evidence" value="ECO:0007669"/>
    <property type="project" value="UniProtKB-KW"/>
</dbReference>
<dbReference type="InterPro" id="IPR039530">
    <property type="entry name" value="L_methyltransferase_rhabdo"/>
</dbReference>
<dbReference type="InterPro" id="IPR039736">
    <property type="entry name" value="L_poly_C"/>
</dbReference>
<dbReference type="InterPro" id="IPR048397">
    <property type="entry name" value="Methyltrans_Mon_CD"/>
</dbReference>
<dbReference type="InterPro" id="IPR026890">
    <property type="entry name" value="Mononeg_mRNAcap"/>
</dbReference>
<dbReference type="InterPro" id="IPR014023">
    <property type="entry name" value="Mononeg_RNA_pol_cat"/>
</dbReference>
<dbReference type="InterPro" id="IPR025786">
    <property type="entry name" value="Mononega_L_MeTrfase"/>
</dbReference>
<dbReference type="NCBIfam" id="TIGR04198">
    <property type="entry name" value="paramyx_RNAcap"/>
    <property type="match status" value="1"/>
</dbReference>
<dbReference type="Pfam" id="PF21080">
    <property type="entry name" value="Methyltrans_Mon_1st"/>
    <property type="match status" value="1"/>
</dbReference>
<dbReference type="Pfam" id="PF14314">
    <property type="entry name" value="Methyltrans_Mon_2nd"/>
    <property type="match status" value="1"/>
</dbReference>
<dbReference type="Pfam" id="PF14318">
    <property type="entry name" value="Mononeg_mRNAcap"/>
    <property type="match status" value="1"/>
</dbReference>
<dbReference type="Pfam" id="PF00946">
    <property type="entry name" value="Mononeg_RNA_pol"/>
    <property type="match status" value="1"/>
</dbReference>
<dbReference type="PROSITE" id="PS50526">
    <property type="entry name" value="RDRP_SSRNA_NEG_NONSEG"/>
    <property type="match status" value="1"/>
</dbReference>
<dbReference type="PROSITE" id="PS51590">
    <property type="entry name" value="SAM_MT_MNV_L"/>
    <property type="match status" value="1"/>
</dbReference>